<feature type="chain" id="PRO_0000256232" description="Adenine deaminase">
    <location>
        <begin position="1"/>
        <end position="356"/>
    </location>
</feature>
<feature type="active site" description="Proton donor" evidence="1">
    <location>
        <position position="214"/>
    </location>
</feature>
<feature type="binding site" evidence="1">
    <location>
        <position position="23"/>
    </location>
    <ligand>
        <name>Zn(2+)</name>
        <dbReference type="ChEBI" id="CHEBI:29105"/>
        <note>catalytic</note>
    </ligand>
</feature>
<feature type="binding site" evidence="1">
    <location>
        <position position="25"/>
    </location>
    <ligand>
        <name>Zn(2+)</name>
        <dbReference type="ChEBI" id="CHEBI:29105"/>
        <note>catalytic</note>
    </ligand>
</feature>
<feature type="binding site" evidence="1">
    <location>
        <position position="211"/>
    </location>
    <ligand>
        <name>Zn(2+)</name>
        <dbReference type="ChEBI" id="CHEBI:29105"/>
        <note>catalytic</note>
    </ligand>
</feature>
<feature type="binding site" evidence="1">
    <location>
        <position position="292"/>
    </location>
    <ligand>
        <name>Zn(2+)</name>
        <dbReference type="ChEBI" id="CHEBI:29105"/>
        <note>catalytic</note>
    </ligand>
</feature>
<feature type="binding site" evidence="1">
    <location>
        <position position="293"/>
    </location>
    <ligand>
        <name>substrate</name>
    </ligand>
</feature>
<feature type="site" description="Important for catalytic activity" evidence="1">
    <location>
        <position position="235"/>
    </location>
</feature>
<keyword id="KW-0963">Cytoplasm</keyword>
<keyword id="KW-0378">Hydrolase</keyword>
<keyword id="KW-0479">Metal-binding</keyword>
<keyword id="KW-0546">Nucleotide metabolism</keyword>
<keyword id="KW-0539">Nucleus</keyword>
<keyword id="KW-1185">Reference proteome</keyword>
<keyword id="KW-0862">Zinc</keyword>
<comment type="function">
    <text evidence="1">Catalyzes the hydrolytic deamination of adenine to hypoxanthine. Plays an important role in the purine salvage pathway and in nitrogen catabolism.</text>
</comment>
<comment type="catalytic activity">
    <reaction evidence="1">
        <text>adenine + H2O + H(+) = hypoxanthine + NH4(+)</text>
        <dbReference type="Rhea" id="RHEA:23688"/>
        <dbReference type="ChEBI" id="CHEBI:15377"/>
        <dbReference type="ChEBI" id="CHEBI:15378"/>
        <dbReference type="ChEBI" id="CHEBI:16708"/>
        <dbReference type="ChEBI" id="CHEBI:17368"/>
        <dbReference type="ChEBI" id="CHEBI:28938"/>
        <dbReference type="EC" id="3.5.4.2"/>
    </reaction>
</comment>
<comment type="cofactor">
    <cofactor evidence="1">
        <name>Zn(2+)</name>
        <dbReference type="ChEBI" id="CHEBI:29105"/>
    </cofactor>
    <text evidence="1">Binds 1 zinc ion per subunit.</text>
</comment>
<comment type="subcellular location">
    <subcellularLocation>
        <location evidence="1">Cytoplasm</location>
    </subcellularLocation>
    <subcellularLocation>
        <location evidence="1">Nucleus</location>
    </subcellularLocation>
</comment>
<comment type="similarity">
    <text evidence="1">Belongs to the metallo-dependent hydrolases superfamily. Adenosine and AMP deaminases family. Adenine deaminase type 2 subfamily.</text>
</comment>
<comment type="sequence caution" evidence="2">
    <conflict type="erroneous initiation">
        <sequence resource="EMBL-CDS" id="AOW27697"/>
    </conflict>
    <text>Truncated N-terminus.</text>
</comment>
<dbReference type="EC" id="3.5.4.2" evidence="1"/>
<dbReference type="EMBL" id="CP017624">
    <property type="protein sequence ID" value="AOW27697.1"/>
    <property type="status" value="ALT_INIT"/>
    <property type="molecule type" value="Genomic_DNA"/>
</dbReference>
<dbReference type="RefSeq" id="XP_714841.2">
    <property type="nucleotide sequence ID" value="XM_709748.2"/>
</dbReference>
<dbReference type="SMR" id="Q59ZB1"/>
<dbReference type="FunCoup" id="Q59ZB1">
    <property type="interactions" value="639"/>
</dbReference>
<dbReference type="STRING" id="237561.Q59ZB1"/>
<dbReference type="PeptideAtlas" id="Q59ZB1"/>
<dbReference type="GeneID" id="3643529"/>
<dbReference type="KEGG" id="cal:CAALFM_C206970WA"/>
<dbReference type="eggNOG" id="KOG1097">
    <property type="taxonomic scope" value="Eukaryota"/>
</dbReference>
<dbReference type="HOGENOM" id="CLU_039228_7_0_1"/>
<dbReference type="InParanoid" id="Q59ZB1"/>
<dbReference type="OrthoDB" id="272271at2759"/>
<dbReference type="PRO" id="PR:Q59ZB1"/>
<dbReference type="Proteomes" id="UP000000559">
    <property type="component" value="Chromosome 2"/>
</dbReference>
<dbReference type="GO" id="GO:0005737">
    <property type="term" value="C:cytoplasm"/>
    <property type="evidence" value="ECO:0007669"/>
    <property type="project" value="UniProtKB-SubCell"/>
</dbReference>
<dbReference type="GO" id="GO:0005634">
    <property type="term" value="C:nucleus"/>
    <property type="evidence" value="ECO:0007669"/>
    <property type="project" value="UniProtKB-SubCell"/>
</dbReference>
<dbReference type="GO" id="GO:0000034">
    <property type="term" value="F:adenine deaminase activity"/>
    <property type="evidence" value="ECO:0000318"/>
    <property type="project" value="GO_Central"/>
</dbReference>
<dbReference type="GO" id="GO:0008270">
    <property type="term" value="F:zinc ion binding"/>
    <property type="evidence" value="ECO:0007669"/>
    <property type="project" value="UniProtKB-UniRule"/>
</dbReference>
<dbReference type="GO" id="GO:0006146">
    <property type="term" value="P:adenine catabolic process"/>
    <property type="evidence" value="ECO:0000318"/>
    <property type="project" value="GO_Central"/>
</dbReference>
<dbReference type="GO" id="GO:0043103">
    <property type="term" value="P:hypoxanthine salvage"/>
    <property type="evidence" value="ECO:0000318"/>
    <property type="project" value="GO_Central"/>
</dbReference>
<dbReference type="GO" id="GO:0009117">
    <property type="term" value="P:nucleotide metabolic process"/>
    <property type="evidence" value="ECO:0007669"/>
    <property type="project" value="UniProtKB-KW"/>
</dbReference>
<dbReference type="GO" id="GO:0009168">
    <property type="term" value="P:purine ribonucleoside monophosphate biosynthetic process"/>
    <property type="evidence" value="ECO:0007669"/>
    <property type="project" value="InterPro"/>
</dbReference>
<dbReference type="CDD" id="cd01320">
    <property type="entry name" value="ADA"/>
    <property type="match status" value="1"/>
</dbReference>
<dbReference type="FunFam" id="3.20.20.140:FF:000039">
    <property type="entry name" value="Adenine deaminase"/>
    <property type="match status" value="1"/>
</dbReference>
<dbReference type="Gene3D" id="3.20.20.140">
    <property type="entry name" value="Metal-dependent hydrolases"/>
    <property type="match status" value="1"/>
</dbReference>
<dbReference type="HAMAP" id="MF_01962">
    <property type="entry name" value="Adenine_deaminase"/>
    <property type="match status" value="1"/>
</dbReference>
<dbReference type="InterPro" id="IPR006650">
    <property type="entry name" value="A/AMP_deam_AS"/>
</dbReference>
<dbReference type="InterPro" id="IPR001365">
    <property type="entry name" value="A_deaminase_dom"/>
</dbReference>
<dbReference type="InterPro" id="IPR028892">
    <property type="entry name" value="ADE"/>
</dbReference>
<dbReference type="InterPro" id="IPR006330">
    <property type="entry name" value="Ado/ade_deaminase"/>
</dbReference>
<dbReference type="InterPro" id="IPR032466">
    <property type="entry name" value="Metal_Hydrolase"/>
</dbReference>
<dbReference type="NCBIfam" id="TIGR01430">
    <property type="entry name" value="aden_deam"/>
    <property type="match status" value="1"/>
</dbReference>
<dbReference type="PANTHER" id="PTHR43114">
    <property type="entry name" value="ADENINE DEAMINASE"/>
    <property type="match status" value="1"/>
</dbReference>
<dbReference type="PANTHER" id="PTHR43114:SF6">
    <property type="entry name" value="ADENINE DEAMINASE"/>
    <property type="match status" value="1"/>
</dbReference>
<dbReference type="Pfam" id="PF00962">
    <property type="entry name" value="A_deaminase"/>
    <property type="match status" value="1"/>
</dbReference>
<dbReference type="SUPFAM" id="SSF51556">
    <property type="entry name" value="Metallo-dependent hydrolases"/>
    <property type="match status" value="1"/>
</dbReference>
<dbReference type="PROSITE" id="PS00485">
    <property type="entry name" value="A_DEAMINASE"/>
    <property type="match status" value="1"/>
</dbReference>
<sequence>MAQYECSEHMENFLRELPKCEHHVHLEGTLEPSLLFKLAKRNNITLPETFPKTVEECNDRYNRFADLQDFLDHYYIGMGVLITENDFYDLAMDYFTKAHSDGCLHSEVFFDPQGHVERNIDIDVVVQGFNRACKDANTKYGTTNKLIMCLLRHLPAENGLQTIHSASKYYQDGIIHGLGLDSSEKPFPPNLFTECYAHIKDNFPEVGLTAHAGEEGDHTFVSDALNLLKVSRIDHGVNSHQSEELMQRLAEQKTLLSLCPLSNVKLQVVKDVKELPIDKFFQMNVPFSINSDDPAYFGGYILDNYKAVHTRFGFTKDQWKIIALNGIKGSWCDDQRKNELISLVEEVYKKYNIEGC</sequence>
<proteinExistence type="inferred from homology"/>
<gene>
    <name evidence="1" type="primary">AAH1</name>
    <name type="ordered locus">CAALFM_C206970WA</name>
    <name type="ORF">CaO19.2251</name>
    <name type="ORF">CaO19.9791</name>
</gene>
<name>ADE_CANAL</name>
<reference key="1">
    <citation type="journal article" date="2004" name="Proc. Natl. Acad. Sci. U.S.A.">
        <title>The diploid genome sequence of Candida albicans.</title>
        <authorList>
            <person name="Jones T."/>
            <person name="Federspiel N.A."/>
            <person name="Chibana H."/>
            <person name="Dungan J."/>
            <person name="Kalman S."/>
            <person name="Magee B.B."/>
            <person name="Newport G."/>
            <person name="Thorstenson Y.R."/>
            <person name="Agabian N."/>
            <person name="Magee P.T."/>
            <person name="Davis R.W."/>
            <person name="Scherer S."/>
        </authorList>
    </citation>
    <scope>NUCLEOTIDE SEQUENCE [LARGE SCALE GENOMIC DNA]</scope>
    <source>
        <strain>SC5314 / ATCC MYA-2876</strain>
    </source>
</reference>
<reference key="2">
    <citation type="journal article" date="2007" name="Genome Biol.">
        <title>Assembly of the Candida albicans genome into sixteen supercontigs aligned on the eight chromosomes.</title>
        <authorList>
            <person name="van het Hoog M."/>
            <person name="Rast T.J."/>
            <person name="Martchenko M."/>
            <person name="Grindle S."/>
            <person name="Dignard D."/>
            <person name="Hogues H."/>
            <person name="Cuomo C."/>
            <person name="Berriman M."/>
            <person name="Scherer S."/>
            <person name="Magee B.B."/>
            <person name="Whiteway M."/>
            <person name="Chibana H."/>
            <person name="Nantel A."/>
            <person name="Magee P.T."/>
        </authorList>
    </citation>
    <scope>GENOME REANNOTATION</scope>
    <source>
        <strain>SC5314 / ATCC MYA-2876</strain>
    </source>
</reference>
<reference key="3">
    <citation type="journal article" date="2013" name="Genome Biol.">
        <title>Assembly of a phased diploid Candida albicans genome facilitates allele-specific measurements and provides a simple model for repeat and indel structure.</title>
        <authorList>
            <person name="Muzzey D."/>
            <person name="Schwartz K."/>
            <person name="Weissman J.S."/>
            <person name="Sherlock G."/>
        </authorList>
    </citation>
    <scope>NUCLEOTIDE SEQUENCE [LARGE SCALE GENOMIC DNA]</scope>
    <scope>GENOME REANNOTATION</scope>
    <source>
        <strain>SC5314 / ATCC MYA-2876</strain>
    </source>
</reference>
<evidence type="ECO:0000255" key="1">
    <source>
        <dbReference type="HAMAP-Rule" id="MF_03145"/>
    </source>
</evidence>
<evidence type="ECO:0000305" key="2"/>
<accession>Q59ZB1</accession>
<accession>A0A1D8PHS3</accession>
<accession>Q59Z49</accession>
<protein>
    <recommendedName>
        <fullName evidence="1">Adenine deaminase</fullName>
        <shortName evidence="1">ADE</shortName>
        <ecNumber evidence="1">3.5.4.2</ecNumber>
    </recommendedName>
    <alternativeName>
        <fullName evidence="1">Adenine aminohydrolase</fullName>
        <shortName evidence="1">AAH</shortName>
    </alternativeName>
</protein>
<organism>
    <name type="scientific">Candida albicans (strain SC5314 / ATCC MYA-2876)</name>
    <name type="common">Yeast</name>
    <dbReference type="NCBI Taxonomy" id="237561"/>
    <lineage>
        <taxon>Eukaryota</taxon>
        <taxon>Fungi</taxon>
        <taxon>Dikarya</taxon>
        <taxon>Ascomycota</taxon>
        <taxon>Saccharomycotina</taxon>
        <taxon>Pichiomycetes</taxon>
        <taxon>Debaryomycetaceae</taxon>
        <taxon>Candida/Lodderomyces clade</taxon>
        <taxon>Candida</taxon>
    </lineage>
</organism>